<reference key="1">
    <citation type="journal article" date="2007" name="Genome Res.">
        <title>Reductive evolution and niche adaptation inferred from the genome of Mycobacterium ulcerans, the causative agent of Buruli ulcer.</title>
        <authorList>
            <person name="Stinear T.P."/>
            <person name="Seemann T."/>
            <person name="Pidot S."/>
            <person name="Frigui W."/>
            <person name="Reysset G."/>
            <person name="Garnier T."/>
            <person name="Meurice G."/>
            <person name="Simon D."/>
            <person name="Bouchier C."/>
            <person name="Ma L."/>
            <person name="Tichit M."/>
            <person name="Porter J.L."/>
            <person name="Ryan J."/>
            <person name="Johnson P.D.R."/>
            <person name="Davies J.K."/>
            <person name="Jenkin G.A."/>
            <person name="Small P.L.C."/>
            <person name="Jones L.M."/>
            <person name="Tekaia F."/>
            <person name="Laval F."/>
            <person name="Daffe M."/>
            <person name="Parkhill J."/>
            <person name="Cole S.T."/>
        </authorList>
    </citation>
    <scope>NUCLEOTIDE SEQUENCE [LARGE SCALE GENOMIC DNA]</scope>
    <source>
        <strain>Agy99</strain>
    </source>
</reference>
<dbReference type="EMBL" id="CP000325">
    <property type="protein sequence ID" value="ABL04498.1"/>
    <property type="status" value="ALT_INIT"/>
    <property type="molecule type" value="Genomic_DNA"/>
</dbReference>
<dbReference type="RefSeq" id="WP_071497732.1">
    <property type="nucleotide sequence ID" value="NC_008611.1"/>
</dbReference>
<dbReference type="SMR" id="A0PQ79"/>
<dbReference type="KEGG" id="mul:MUL_2067"/>
<dbReference type="eggNOG" id="COG0052">
    <property type="taxonomic scope" value="Bacteria"/>
</dbReference>
<dbReference type="HOGENOM" id="CLU_040318_2_3_11"/>
<dbReference type="Proteomes" id="UP000000765">
    <property type="component" value="Chromosome"/>
</dbReference>
<dbReference type="GO" id="GO:0022627">
    <property type="term" value="C:cytosolic small ribosomal subunit"/>
    <property type="evidence" value="ECO:0007669"/>
    <property type="project" value="TreeGrafter"/>
</dbReference>
<dbReference type="GO" id="GO:0003735">
    <property type="term" value="F:structural constituent of ribosome"/>
    <property type="evidence" value="ECO:0007669"/>
    <property type="project" value="InterPro"/>
</dbReference>
<dbReference type="GO" id="GO:0006412">
    <property type="term" value="P:translation"/>
    <property type="evidence" value="ECO:0007669"/>
    <property type="project" value="UniProtKB-UniRule"/>
</dbReference>
<dbReference type="CDD" id="cd01425">
    <property type="entry name" value="RPS2"/>
    <property type="match status" value="1"/>
</dbReference>
<dbReference type="FunFam" id="1.10.287.610:FF:000001">
    <property type="entry name" value="30S ribosomal protein S2"/>
    <property type="match status" value="1"/>
</dbReference>
<dbReference type="Gene3D" id="3.40.50.10490">
    <property type="entry name" value="Glucose-6-phosphate isomerase like protein, domain 1"/>
    <property type="match status" value="1"/>
</dbReference>
<dbReference type="Gene3D" id="1.10.287.610">
    <property type="entry name" value="Helix hairpin bin"/>
    <property type="match status" value="1"/>
</dbReference>
<dbReference type="HAMAP" id="MF_00291_B">
    <property type="entry name" value="Ribosomal_uS2_B"/>
    <property type="match status" value="1"/>
</dbReference>
<dbReference type="InterPro" id="IPR001865">
    <property type="entry name" value="Ribosomal_uS2"/>
</dbReference>
<dbReference type="InterPro" id="IPR005706">
    <property type="entry name" value="Ribosomal_uS2_bac/mit/plastid"/>
</dbReference>
<dbReference type="InterPro" id="IPR018130">
    <property type="entry name" value="Ribosomal_uS2_CS"/>
</dbReference>
<dbReference type="InterPro" id="IPR023591">
    <property type="entry name" value="Ribosomal_uS2_flav_dom_sf"/>
</dbReference>
<dbReference type="NCBIfam" id="TIGR01011">
    <property type="entry name" value="rpsB_bact"/>
    <property type="match status" value="1"/>
</dbReference>
<dbReference type="PANTHER" id="PTHR12534">
    <property type="entry name" value="30S RIBOSOMAL PROTEIN S2 PROKARYOTIC AND ORGANELLAR"/>
    <property type="match status" value="1"/>
</dbReference>
<dbReference type="PANTHER" id="PTHR12534:SF0">
    <property type="entry name" value="SMALL RIBOSOMAL SUBUNIT PROTEIN US2M"/>
    <property type="match status" value="1"/>
</dbReference>
<dbReference type="Pfam" id="PF00318">
    <property type="entry name" value="Ribosomal_S2"/>
    <property type="match status" value="1"/>
</dbReference>
<dbReference type="PRINTS" id="PR00395">
    <property type="entry name" value="RIBOSOMALS2"/>
</dbReference>
<dbReference type="SUPFAM" id="SSF52313">
    <property type="entry name" value="Ribosomal protein S2"/>
    <property type="match status" value="1"/>
</dbReference>
<dbReference type="PROSITE" id="PS00962">
    <property type="entry name" value="RIBOSOMAL_S2_1"/>
    <property type="match status" value="1"/>
</dbReference>
<organism>
    <name type="scientific">Mycobacterium ulcerans (strain Agy99)</name>
    <dbReference type="NCBI Taxonomy" id="362242"/>
    <lineage>
        <taxon>Bacteria</taxon>
        <taxon>Bacillati</taxon>
        <taxon>Actinomycetota</taxon>
        <taxon>Actinomycetes</taxon>
        <taxon>Mycobacteriales</taxon>
        <taxon>Mycobacteriaceae</taxon>
        <taxon>Mycobacterium</taxon>
        <taxon>Mycobacterium ulcerans group</taxon>
    </lineage>
</organism>
<keyword id="KW-0687">Ribonucleoprotein</keyword>
<keyword id="KW-0689">Ribosomal protein</keyword>
<protein>
    <recommendedName>
        <fullName evidence="1">Small ribosomal subunit protein uS2</fullName>
    </recommendedName>
    <alternativeName>
        <fullName evidence="3">30S ribosomal protein S2</fullName>
    </alternativeName>
</protein>
<feature type="chain" id="PRO_0000352009" description="Small ribosomal subunit protein uS2">
    <location>
        <begin position="1"/>
        <end position="276"/>
    </location>
</feature>
<feature type="region of interest" description="Disordered" evidence="2">
    <location>
        <begin position="254"/>
        <end position="276"/>
    </location>
</feature>
<feature type="compositionally biased region" description="Low complexity" evidence="2">
    <location>
        <begin position="255"/>
        <end position="276"/>
    </location>
</feature>
<evidence type="ECO:0000255" key="1">
    <source>
        <dbReference type="HAMAP-Rule" id="MF_00291"/>
    </source>
</evidence>
<evidence type="ECO:0000256" key="2">
    <source>
        <dbReference type="SAM" id="MobiDB-lite"/>
    </source>
</evidence>
<evidence type="ECO:0000305" key="3"/>
<proteinExistence type="inferred from homology"/>
<sequence length="276" mass="29981">MAVVTMKQLLDSGTHFGHQTRRWNPKMKRFIFTDRNGIYIIDLQQTLTFIDKAYEFVKETVAHGGTVLFVGTKKQAQESVAAEATRVGMPYVNQRWLGGMLTNFSTVHKRLQRLKELEAMEQTGGFEGRSKKEILGLTREKNKLERSLGGIRDMAKVPSAIWVVDTNKEHIAVGEARKLGIPVIAILDTNCDPDEVDYPIPGNDDAIRSAALLTKVIASAVAEGLQARAGAGRGDGKPVVEAAEPLAEWEQELLAGATAAAPAEGAVATETTPTEG</sequence>
<gene>
    <name evidence="1" type="primary">rpsB</name>
    <name type="ordered locus">MUL_2067</name>
</gene>
<comment type="similarity">
    <text evidence="1">Belongs to the universal ribosomal protein uS2 family.</text>
</comment>
<comment type="sequence caution" evidence="3">
    <conflict type="erroneous initiation">
        <sequence resource="EMBL-CDS" id="ABL04498"/>
    </conflict>
</comment>
<accession>A0PQ79</accession>
<name>RS2_MYCUA</name>